<name>RUVC_MYCS2</name>
<feature type="chain" id="PRO_1000002779" description="Crossover junction endodeoxyribonuclease RuvC">
    <location>
        <begin position="1"/>
        <end position="185"/>
    </location>
</feature>
<feature type="active site" evidence="1">
    <location>
        <position position="7"/>
    </location>
</feature>
<feature type="active site" evidence="1">
    <location>
        <position position="68"/>
    </location>
</feature>
<feature type="active site" evidence="1">
    <location>
        <position position="141"/>
    </location>
</feature>
<feature type="binding site" evidence="1">
    <location>
        <position position="7"/>
    </location>
    <ligand>
        <name>Mg(2+)</name>
        <dbReference type="ChEBI" id="CHEBI:18420"/>
        <label>1</label>
    </ligand>
</feature>
<feature type="binding site" evidence="1">
    <location>
        <position position="68"/>
    </location>
    <ligand>
        <name>Mg(2+)</name>
        <dbReference type="ChEBI" id="CHEBI:18420"/>
        <label>2</label>
    </ligand>
</feature>
<feature type="binding site" evidence="1">
    <location>
        <position position="141"/>
    </location>
    <ligand>
        <name>Mg(2+)</name>
        <dbReference type="ChEBI" id="CHEBI:18420"/>
        <label>1</label>
    </ligand>
</feature>
<comment type="function">
    <text evidence="1">The RuvA-RuvB-RuvC complex processes Holliday junction (HJ) DNA during genetic recombination and DNA repair. Endonuclease that resolves HJ intermediates. Cleaves cruciform DNA by making single-stranded nicks across the HJ at symmetrical positions within the homologous arms, yielding a 5'-phosphate and a 3'-hydroxyl group; requires a central core of homology in the junction. The consensus cleavage sequence is 5'-(A/T)TT(C/G)-3'. Cleavage occurs on the 3'-side of the TT dinucleotide at the point of strand exchange. HJ branch migration catalyzed by RuvA-RuvB allows RuvC to scan DNA until it finds its consensus sequence, where it cleaves and resolves the cruciform DNA.</text>
</comment>
<comment type="catalytic activity">
    <reaction evidence="1">
        <text>Endonucleolytic cleavage at a junction such as a reciprocal single-stranded crossover between two homologous DNA duplexes (Holliday junction).</text>
        <dbReference type="EC" id="3.1.21.10"/>
    </reaction>
</comment>
<comment type="cofactor">
    <cofactor evidence="1">
        <name>Mg(2+)</name>
        <dbReference type="ChEBI" id="CHEBI:18420"/>
    </cofactor>
    <text evidence="1">Binds 2 Mg(2+) ion per subunit.</text>
</comment>
<comment type="subunit">
    <text evidence="1">Homodimer which binds Holliday junction (HJ) DNA. The HJ becomes 2-fold symmetrical on binding to RuvC with unstacked arms; it has a different conformation from HJ DNA in complex with RuvA. In the full resolvosome a probable DNA-RuvA(4)-RuvB(12)-RuvC(2) complex forms which resolves the HJ.</text>
</comment>
<comment type="subcellular location">
    <subcellularLocation>
        <location evidence="1">Cytoplasm</location>
    </subcellularLocation>
</comment>
<comment type="similarity">
    <text evidence="1">Belongs to the RuvC family.</text>
</comment>
<dbReference type="EC" id="3.1.21.10" evidence="1"/>
<dbReference type="EMBL" id="CP000480">
    <property type="protein sequence ID" value="ABK76031.1"/>
    <property type="molecule type" value="Genomic_DNA"/>
</dbReference>
<dbReference type="EMBL" id="CP001663">
    <property type="protein sequence ID" value="AFP39333.1"/>
    <property type="molecule type" value="Genomic_DNA"/>
</dbReference>
<dbReference type="RefSeq" id="WP_003894321.1">
    <property type="nucleotide sequence ID" value="NZ_SIJM01000002.1"/>
</dbReference>
<dbReference type="RefSeq" id="YP_887262.1">
    <property type="nucleotide sequence ID" value="NC_008596.1"/>
</dbReference>
<dbReference type="SMR" id="A0QWH4"/>
<dbReference type="STRING" id="246196.MSMEG_2943"/>
<dbReference type="PaxDb" id="246196-MSMEI_2869"/>
<dbReference type="GeneID" id="93457723"/>
<dbReference type="KEGG" id="msb:LJ00_14645"/>
<dbReference type="KEGG" id="msg:MSMEI_2869"/>
<dbReference type="KEGG" id="msm:MSMEG_2943"/>
<dbReference type="PATRIC" id="fig|246196.19.peg.2906"/>
<dbReference type="eggNOG" id="COG0817">
    <property type="taxonomic scope" value="Bacteria"/>
</dbReference>
<dbReference type="OrthoDB" id="9805499at2"/>
<dbReference type="Proteomes" id="UP000000757">
    <property type="component" value="Chromosome"/>
</dbReference>
<dbReference type="Proteomes" id="UP000006158">
    <property type="component" value="Chromosome"/>
</dbReference>
<dbReference type="GO" id="GO:0005737">
    <property type="term" value="C:cytoplasm"/>
    <property type="evidence" value="ECO:0007669"/>
    <property type="project" value="UniProtKB-SubCell"/>
</dbReference>
<dbReference type="GO" id="GO:0048476">
    <property type="term" value="C:Holliday junction resolvase complex"/>
    <property type="evidence" value="ECO:0007669"/>
    <property type="project" value="UniProtKB-UniRule"/>
</dbReference>
<dbReference type="GO" id="GO:0008821">
    <property type="term" value="F:crossover junction DNA endonuclease activity"/>
    <property type="evidence" value="ECO:0007669"/>
    <property type="project" value="UniProtKB-UniRule"/>
</dbReference>
<dbReference type="GO" id="GO:0003677">
    <property type="term" value="F:DNA binding"/>
    <property type="evidence" value="ECO:0007669"/>
    <property type="project" value="UniProtKB-KW"/>
</dbReference>
<dbReference type="GO" id="GO:0000287">
    <property type="term" value="F:magnesium ion binding"/>
    <property type="evidence" value="ECO:0007669"/>
    <property type="project" value="UniProtKB-UniRule"/>
</dbReference>
<dbReference type="GO" id="GO:0006310">
    <property type="term" value="P:DNA recombination"/>
    <property type="evidence" value="ECO:0007669"/>
    <property type="project" value="UniProtKB-UniRule"/>
</dbReference>
<dbReference type="GO" id="GO:0006281">
    <property type="term" value="P:DNA repair"/>
    <property type="evidence" value="ECO:0007669"/>
    <property type="project" value="UniProtKB-UniRule"/>
</dbReference>
<dbReference type="CDD" id="cd16962">
    <property type="entry name" value="RuvC"/>
    <property type="match status" value="1"/>
</dbReference>
<dbReference type="FunFam" id="3.30.420.10:FF:000002">
    <property type="entry name" value="Crossover junction endodeoxyribonuclease RuvC"/>
    <property type="match status" value="1"/>
</dbReference>
<dbReference type="Gene3D" id="3.30.420.10">
    <property type="entry name" value="Ribonuclease H-like superfamily/Ribonuclease H"/>
    <property type="match status" value="1"/>
</dbReference>
<dbReference type="HAMAP" id="MF_00034">
    <property type="entry name" value="RuvC"/>
    <property type="match status" value="1"/>
</dbReference>
<dbReference type="InterPro" id="IPR012337">
    <property type="entry name" value="RNaseH-like_sf"/>
</dbReference>
<dbReference type="InterPro" id="IPR036397">
    <property type="entry name" value="RNaseH_sf"/>
</dbReference>
<dbReference type="InterPro" id="IPR020563">
    <property type="entry name" value="X-over_junc_endoDNase_Mg_BS"/>
</dbReference>
<dbReference type="InterPro" id="IPR002176">
    <property type="entry name" value="X-over_junc_endoDNase_RuvC"/>
</dbReference>
<dbReference type="NCBIfam" id="NF000711">
    <property type="entry name" value="PRK00039.2-1"/>
    <property type="match status" value="1"/>
</dbReference>
<dbReference type="NCBIfam" id="TIGR00228">
    <property type="entry name" value="ruvC"/>
    <property type="match status" value="1"/>
</dbReference>
<dbReference type="PANTHER" id="PTHR30194">
    <property type="entry name" value="CROSSOVER JUNCTION ENDODEOXYRIBONUCLEASE RUVC"/>
    <property type="match status" value="1"/>
</dbReference>
<dbReference type="PANTHER" id="PTHR30194:SF3">
    <property type="entry name" value="CROSSOVER JUNCTION ENDODEOXYRIBONUCLEASE RUVC"/>
    <property type="match status" value="1"/>
</dbReference>
<dbReference type="Pfam" id="PF02075">
    <property type="entry name" value="RuvC"/>
    <property type="match status" value="1"/>
</dbReference>
<dbReference type="PRINTS" id="PR00696">
    <property type="entry name" value="RSOLVASERUVC"/>
</dbReference>
<dbReference type="SUPFAM" id="SSF53098">
    <property type="entry name" value="Ribonuclease H-like"/>
    <property type="match status" value="1"/>
</dbReference>
<dbReference type="PROSITE" id="PS01321">
    <property type="entry name" value="RUVC"/>
    <property type="match status" value="1"/>
</dbReference>
<sequence length="185" mass="19805">MRVMGVDPGLTRCGLSMIESGKGRQVIALDVDVVRTPADTPLQKRLLTISDAAEHWMDTHRPDVIAIERVFANQNANTAMGTAQAGGVIALAAAKRDIEVHFHTPSEVKAAVTGSGRADKSQVTEMVTRILALQAKPTPADAADALALAICHCWRAPMIARMAAAEAMAEEQRRKFQAKIKAARG</sequence>
<gene>
    <name evidence="1" type="primary">ruvC</name>
    <name type="ordered locus">MSMEG_2943</name>
    <name type="ordered locus">MSMEI_2869</name>
</gene>
<keyword id="KW-0963">Cytoplasm</keyword>
<keyword id="KW-0227">DNA damage</keyword>
<keyword id="KW-0233">DNA recombination</keyword>
<keyword id="KW-0234">DNA repair</keyword>
<keyword id="KW-0238">DNA-binding</keyword>
<keyword id="KW-0255">Endonuclease</keyword>
<keyword id="KW-0378">Hydrolase</keyword>
<keyword id="KW-0460">Magnesium</keyword>
<keyword id="KW-0479">Metal-binding</keyword>
<keyword id="KW-0540">Nuclease</keyword>
<keyword id="KW-1185">Reference proteome</keyword>
<evidence type="ECO:0000255" key="1">
    <source>
        <dbReference type="HAMAP-Rule" id="MF_00034"/>
    </source>
</evidence>
<accession>A0QWH4</accession>
<accession>I7FKR3</accession>
<organism>
    <name type="scientific">Mycolicibacterium smegmatis (strain ATCC 700084 / mc(2)155)</name>
    <name type="common">Mycobacterium smegmatis</name>
    <dbReference type="NCBI Taxonomy" id="246196"/>
    <lineage>
        <taxon>Bacteria</taxon>
        <taxon>Bacillati</taxon>
        <taxon>Actinomycetota</taxon>
        <taxon>Actinomycetes</taxon>
        <taxon>Mycobacteriales</taxon>
        <taxon>Mycobacteriaceae</taxon>
        <taxon>Mycolicibacterium</taxon>
    </lineage>
</organism>
<protein>
    <recommendedName>
        <fullName evidence="1">Crossover junction endodeoxyribonuclease RuvC</fullName>
        <ecNumber evidence="1">3.1.21.10</ecNumber>
    </recommendedName>
    <alternativeName>
        <fullName evidence="1">Holliday junction nuclease RuvC</fullName>
    </alternativeName>
    <alternativeName>
        <fullName evidence="1">Holliday junction resolvase RuvC</fullName>
    </alternativeName>
</protein>
<proteinExistence type="inferred from homology"/>
<reference key="1">
    <citation type="submission" date="2006-10" db="EMBL/GenBank/DDBJ databases">
        <authorList>
            <person name="Fleischmann R.D."/>
            <person name="Dodson R.J."/>
            <person name="Haft D.H."/>
            <person name="Merkel J.S."/>
            <person name="Nelson W.C."/>
            <person name="Fraser C.M."/>
        </authorList>
    </citation>
    <scope>NUCLEOTIDE SEQUENCE [LARGE SCALE GENOMIC DNA]</scope>
    <source>
        <strain>ATCC 700084 / mc(2)155</strain>
    </source>
</reference>
<reference key="2">
    <citation type="journal article" date="2007" name="Genome Biol.">
        <title>Interrupted coding sequences in Mycobacterium smegmatis: authentic mutations or sequencing errors?</title>
        <authorList>
            <person name="Deshayes C."/>
            <person name="Perrodou E."/>
            <person name="Gallien S."/>
            <person name="Euphrasie D."/>
            <person name="Schaeffer C."/>
            <person name="Van-Dorsselaer A."/>
            <person name="Poch O."/>
            <person name="Lecompte O."/>
            <person name="Reyrat J.-M."/>
        </authorList>
    </citation>
    <scope>NUCLEOTIDE SEQUENCE [LARGE SCALE GENOMIC DNA]</scope>
    <source>
        <strain>ATCC 700084 / mc(2)155</strain>
    </source>
</reference>
<reference key="3">
    <citation type="journal article" date="2009" name="Genome Res.">
        <title>Ortho-proteogenomics: multiple proteomes investigation through orthology and a new MS-based protocol.</title>
        <authorList>
            <person name="Gallien S."/>
            <person name="Perrodou E."/>
            <person name="Carapito C."/>
            <person name="Deshayes C."/>
            <person name="Reyrat J.-M."/>
            <person name="Van Dorsselaer A."/>
            <person name="Poch O."/>
            <person name="Schaeffer C."/>
            <person name="Lecompte O."/>
        </authorList>
    </citation>
    <scope>NUCLEOTIDE SEQUENCE [LARGE SCALE GENOMIC DNA]</scope>
    <source>
        <strain>ATCC 700084 / mc(2)155</strain>
    </source>
</reference>